<proteinExistence type="inferred from homology"/>
<evidence type="ECO:0000255" key="1">
    <source>
        <dbReference type="HAMAP-Rule" id="MF_00052"/>
    </source>
</evidence>
<evidence type="ECO:0000255" key="2">
    <source>
        <dbReference type="PROSITE-ProRule" id="PRU01319"/>
    </source>
</evidence>
<gene>
    <name evidence="1" type="primary">rnhB</name>
    <name type="ordered locus">Mmar10_2192</name>
</gene>
<name>RNH2_MARMM</name>
<reference key="1">
    <citation type="submission" date="2006-08" db="EMBL/GenBank/DDBJ databases">
        <title>Complete sequence of Maricaulis maris MCS10.</title>
        <authorList>
            <consortium name="US DOE Joint Genome Institute"/>
            <person name="Copeland A."/>
            <person name="Lucas S."/>
            <person name="Lapidus A."/>
            <person name="Barry K."/>
            <person name="Detter J.C."/>
            <person name="Glavina del Rio T."/>
            <person name="Hammon N."/>
            <person name="Israni S."/>
            <person name="Dalin E."/>
            <person name="Tice H."/>
            <person name="Pitluck S."/>
            <person name="Saunders E."/>
            <person name="Brettin T."/>
            <person name="Bruce D."/>
            <person name="Han C."/>
            <person name="Tapia R."/>
            <person name="Gilna P."/>
            <person name="Schmutz J."/>
            <person name="Larimer F."/>
            <person name="Land M."/>
            <person name="Hauser L."/>
            <person name="Kyrpides N."/>
            <person name="Mikhailova N."/>
            <person name="Viollier P."/>
            <person name="Stephens C."/>
            <person name="Richardson P."/>
        </authorList>
    </citation>
    <scope>NUCLEOTIDE SEQUENCE [LARGE SCALE GENOMIC DNA]</scope>
    <source>
        <strain>MCS10</strain>
    </source>
</reference>
<feature type="chain" id="PRO_0000334916" description="Ribonuclease HII">
    <location>
        <begin position="1"/>
        <end position="218"/>
    </location>
</feature>
<feature type="domain" description="RNase H type-2" evidence="2">
    <location>
        <begin position="22"/>
        <end position="211"/>
    </location>
</feature>
<feature type="binding site" evidence="1">
    <location>
        <position position="28"/>
    </location>
    <ligand>
        <name>a divalent metal cation</name>
        <dbReference type="ChEBI" id="CHEBI:60240"/>
    </ligand>
</feature>
<feature type="binding site" evidence="1">
    <location>
        <position position="29"/>
    </location>
    <ligand>
        <name>a divalent metal cation</name>
        <dbReference type="ChEBI" id="CHEBI:60240"/>
    </ligand>
</feature>
<feature type="binding site" evidence="1">
    <location>
        <position position="119"/>
    </location>
    <ligand>
        <name>a divalent metal cation</name>
        <dbReference type="ChEBI" id="CHEBI:60240"/>
    </ligand>
</feature>
<sequence length="218" mass="23160">MSVTIPQKDNQSLNKAGMGNTVRIAGVDEAGRGPLSGPVVAAAVILDPTRPITGLGDSKALSERRRRELFRLIRANAWVGIGIAEPAEIDRLNILHATMAAMRRAVARLPVRPTLVLVDGNRLPPGLPCPAEAIIKGDAKEACIGAASIIAKTVRDDLMEQAARRFPGYGFEGHKGYPSAAHKAALETSGACPIHRRSYAPVRAALESRFSTNANRCG</sequence>
<organism>
    <name type="scientific">Maricaulis maris (strain MCS10)</name>
    <name type="common">Caulobacter maris</name>
    <dbReference type="NCBI Taxonomy" id="394221"/>
    <lineage>
        <taxon>Bacteria</taxon>
        <taxon>Pseudomonadati</taxon>
        <taxon>Pseudomonadota</taxon>
        <taxon>Alphaproteobacteria</taxon>
        <taxon>Maricaulales</taxon>
        <taxon>Maricaulaceae</taxon>
        <taxon>Maricaulis</taxon>
    </lineage>
</organism>
<comment type="function">
    <text evidence="1">Endonuclease that specifically degrades the RNA of RNA-DNA hybrids.</text>
</comment>
<comment type="catalytic activity">
    <reaction evidence="1">
        <text>Endonucleolytic cleavage to 5'-phosphomonoester.</text>
        <dbReference type="EC" id="3.1.26.4"/>
    </reaction>
</comment>
<comment type="cofactor">
    <cofactor evidence="1">
        <name>Mn(2+)</name>
        <dbReference type="ChEBI" id="CHEBI:29035"/>
    </cofactor>
    <cofactor evidence="1">
        <name>Mg(2+)</name>
        <dbReference type="ChEBI" id="CHEBI:18420"/>
    </cofactor>
    <text evidence="1">Manganese or magnesium. Binds 1 divalent metal ion per monomer in the absence of substrate. May bind a second metal ion after substrate binding.</text>
</comment>
<comment type="subcellular location">
    <subcellularLocation>
        <location evidence="1">Cytoplasm</location>
    </subcellularLocation>
</comment>
<comment type="similarity">
    <text evidence="1">Belongs to the RNase HII family.</text>
</comment>
<accession>Q0AMK3</accession>
<protein>
    <recommendedName>
        <fullName evidence="1">Ribonuclease HII</fullName>
        <shortName evidence="1">RNase HII</shortName>
        <ecNumber evidence="1">3.1.26.4</ecNumber>
    </recommendedName>
</protein>
<keyword id="KW-0963">Cytoplasm</keyword>
<keyword id="KW-0255">Endonuclease</keyword>
<keyword id="KW-0378">Hydrolase</keyword>
<keyword id="KW-0464">Manganese</keyword>
<keyword id="KW-0479">Metal-binding</keyword>
<keyword id="KW-0540">Nuclease</keyword>
<keyword id="KW-1185">Reference proteome</keyword>
<dbReference type="EC" id="3.1.26.4" evidence="1"/>
<dbReference type="EMBL" id="CP000449">
    <property type="protein sequence ID" value="ABI66484.1"/>
    <property type="molecule type" value="Genomic_DNA"/>
</dbReference>
<dbReference type="SMR" id="Q0AMK3"/>
<dbReference type="STRING" id="394221.Mmar10_2192"/>
<dbReference type="KEGG" id="mmr:Mmar10_2192"/>
<dbReference type="eggNOG" id="COG0164">
    <property type="taxonomic scope" value="Bacteria"/>
</dbReference>
<dbReference type="HOGENOM" id="CLU_036532_3_2_5"/>
<dbReference type="Proteomes" id="UP000001964">
    <property type="component" value="Chromosome"/>
</dbReference>
<dbReference type="GO" id="GO:0005737">
    <property type="term" value="C:cytoplasm"/>
    <property type="evidence" value="ECO:0007669"/>
    <property type="project" value="UniProtKB-SubCell"/>
</dbReference>
<dbReference type="GO" id="GO:0032299">
    <property type="term" value="C:ribonuclease H2 complex"/>
    <property type="evidence" value="ECO:0007669"/>
    <property type="project" value="TreeGrafter"/>
</dbReference>
<dbReference type="GO" id="GO:0030145">
    <property type="term" value="F:manganese ion binding"/>
    <property type="evidence" value="ECO:0007669"/>
    <property type="project" value="UniProtKB-UniRule"/>
</dbReference>
<dbReference type="GO" id="GO:0003723">
    <property type="term" value="F:RNA binding"/>
    <property type="evidence" value="ECO:0007669"/>
    <property type="project" value="InterPro"/>
</dbReference>
<dbReference type="GO" id="GO:0004523">
    <property type="term" value="F:RNA-DNA hybrid ribonuclease activity"/>
    <property type="evidence" value="ECO:0007669"/>
    <property type="project" value="UniProtKB-UniRule"/>
</dbReference>
<dbReference type="GO" id="GO:0043137">
    <property type="term" value="P:DNA replication, removal of RNA primer"/>
    <property type="evidence" value="ECO:0007669"/>
    <property type="project" value="TreeGrafter"/>
</dbReference>
<dbReference type="GO" id="GO:0006298">
    <property type="term" value="P:mismatch repair"/>
    <property type="evidence" value="ECO:0007669"/>
    <property type="project" value="TreeGrafter"/>
</dbReference>
<dbReference type="CDD" id="cd07182">
    <property type="entry name" value="RNase_HII_bacteria_HII_like"/>
    <property type="match status" value="1"/>
</dbReference>
<dbReference type="FunFam" id="3.30.420.10:FF:000006">
    <property type="entry name" value="Ribonuclease HII"/>
    <property type="match status" value="1"/>
</dbReference>
<dbReference type="Gene3D" id="3.30.420.10">
    <property type="entry name" value="Ribonuclease H-like superfamily/Ribonuclease H"/>
    <property type="match status" value="1"/>
</dbReference>
<dbReference type="HAMAP" id="MF_00052_B">
    <property type="entry name" value="RNase_HII_B"/>
    <property type="match status" value="1"/>
</dbReference>
<dbReference type="InterPro" id="IPR022898">
    <property type="entry name" value="RNase_HII"/>
</dbReference>
<dbReference type="InterPro" id="IPR001352">
    <property type="entry name" value="RNase_HII/HIII"/>
</dbReference>
<dbReference type="InterPro" id="IPR024567">
    <property type="entry name" value="RNase_HII/HIII_dom"/>
</dbReference>
<dbReference type="InterPro" id="IPR012337">
    <property type="entry name" value="RNaseH-like_sf"/>
</dbReference>
<dbReference type="InterPro" id="IPR036397">
    <property type="entry name" value="RNaseH_sf"/>
</dbReference>
<dbReference type="NCBIfam" id="NF000595">
    <property type="entry name" value="PRK00015.1-3"/>
    <property type="match status" value="1"/>
</dbReference>
<dbReference type="NCBIfam" id="NF000596">
    <property type="entry name" value="PRK00015.1-4"/>
    <property type="match status" value="1"/>
</dbReference>
<dbReference type="PANTHER" id="PTHR10954">
    <property type="entry name" value="RIBONUCLEASE H2 SUBUNIT A"/>
    <property type="match status" value="1"/>
</dbReference>
<dbReference type="PANTHER" id="PTHR10954:SF18">
    <property type="entry name" value="RIBONUCLEASE HII"/>
    <property type="match status" value="1"/>
</dbReference>
<dbReference type="Pfam" id="PF01351">
    <property type="entry name" value="RNase_HII"/>
    <property type="match status" value="1"/>
</dbReference>
<dbReference type="SUPFAM" id="SSF53098">
    <property type="entry name" value="Ribonuclease H-like"/>
    <property type="match status" value="1"/>
</dbReference>
<dbReference type="PROSITE" id="PS51975">
    <property type="entry name" value="RNASE_H_2"/>
    <property type="match status" value="1"/>
</dbReference>